<feature type="chain" id="PRO_0000073386" description="ATP synthase gamma chain">
    <location>
        <begin position="1"/>
        <end position="292"/>
    </location>
</feature>
<feature type="sequence conflict" description="In Ref. 1; AAD13382." evidence="2" ref="1">
    <original>D</original>
    <variation>H</variation>
    <location>
        <position position="56"/>
    </location>
</feature>
<feature type="sequence conflict" description="In Ref. 1; AAD13382." evidence="2" ref="1">
    <original>R</original>
    <variation>H</variation>
    <location>
        <position position="141"/>
    </location>
</feature>
<accession>P95788</accession>
<name>ATPG_STRMU</name>
<dbReference type="EMBL" id="U31170">
    <property type="protein sequence ID" value="AAD13382.1"/>
    <property type="molecule type" value="Genomic_DNA"/>
</dbReference>
<dbReference type="EMBL" id="AE014133">
    <property type="protein sequence ID" value="AAN59179.1"/>
    <property type="molecule type" value="Genomic_DNA"/>
</dbReference>
<dbReference type="PIR" id="JC5740">
    <property type="entry name" value="JC5740"/>
</dbReference>
<dbReference type="RefSeq" id="NP_721873.1">
    <property type="nucleotide sequence ID" value="NC_004350.2"/>
</dbReference>
<dbReference type="RefSeq" id="WP_002262941.1">
    <property type="nucleotide sequence ID" value="NC_004350.2"/>
</dbReference>
<dbReference type="SMR" id="P95788"/>
<dbReference type="STRING" id="210007.SMU_1529"/>
<dbReference type="KEGG" id="smu:SMU_1529"/>
<dbReference type="PATRIC" id="fig|210007.7.peg.1361"/>
<dbReference type="eggNOG" id="COG0224">
    <property type="taxonomic scope" value="Bacteria"/>
</dbReference>
<dbReference type="HOGENOM" id="CLU_050669_0_1_9"/>
<dbReference type="OrthoDB" id="9812769at2"/>
<dbReference type="PhylomeDB" id="P95788"/>
<dbReference type="SABIO-RK" id="P95788"/>
<dbReference type="Proteomes" id="UP000002512">
    <property type="component" value="Chromosome"/>
</dbReference>
<dbReference type="GO" id="GO:0005886">
    <property type="term" value="C:plasma membrane"/>
    <property type="evidence" value="ECO:0007669"/>
    <property type="project" value="UniProtKB-SubCell"/>
</dbReference>
<dbReference type="GO" id="GO:0045259">
    <property type="term" value="C:proton-transporting ATP synthase complex"/>
    <property type="evidence" value="ECO:0007669"/>
    <property type="project" value="UniProtKB-KW"/>
</dbReference>
<dbReference type="GO" id="GO:0005524">
    <property type="term" value="F:ATP binding"/>
    <property type="evidence" value="ECO:0007669"/>
    <property type="project" value="UniProtKB-UniRule"/>
</dbReference>
<dbReference type="GO" id="GO:0046933">
    <property type="term" value="F:proton-transporting ATP synthase activity, rotational mechanism"/>
    <property type="evidence" value="ECO:0007669"/>
    <property type="project" value="UniProtKB-UniRule"/>
</dbReference>
<dbReference type="GO" id="GO:0042777">
    <property type="term" value="P:proton motive force-driven plasma membrane ATP synthesis"/>
    <property type="evidence" value="ECO:0007669"/>
    <property type="project" value="UniProtKB-UniRule"/>
</dbReference>
<dbReference type="CDD" id="cd12151">
    <property type="entry name" value="F1-ATPase_gamma"/>
    <property type="match status" value="1"/>
</dbReference>
<dbReference type="FunFam" id="3.40.1380.10:FF:000002">
    <property type="entry name" value="ATP synthase gamma chain"/>
    <property type="match status" value="1"/>
</dbReference>
<dbReference type="Gene3D" id="3.40.1380.10">
    <property type="match status" value="1"/>
</dbReference>
<dbReference type="Gene3D" id="1.10.287.80">
    <property type="entry name" value="ATP synthase, gamma subunit, helix hairpin domain"/>
    <property type="match status" value="1"/>
</dbReference>
<dbReference type="HAMAP" id="MF_00815">
    <property type="entry name" value="ATP_synth_gamma_bact"/>
    <property type="match status" value="1"/>
</dbReference>
<dbReference type="InterPro" id="IPR035968">
    <property type="entry name" value="ATP_synth_F1_ATPase_gsu"/>
</dbReference>
<dbReference type="InterPro" id="IPR000131">
    <property type="entry name" value="ATP_synth_F1_gsu"/>
</dbReference>
<dbReference type="InterPro" id="IPR023632">
    <property type="entry name" value="ATP_synth_F1_gsu_CS"/>
</dbReference>
<dbReference type="NCBIfam" id="TIGR01146">
    <property type="entry name" value="ATPsyn_F1gamma"/>
    <property type="match status" value="1"/>
</dbReference>
<dbReference type="NCBIfam" id="NF004147">
    <property type="entry name" value="PRK05621.2-1"/>
    <property type="match status" value="1"/>
</dbReference>
<dbReference type="PANTHER" id="PTHR11693">
    <property type="entry name" value="ATP SYNTHASE GAMMA CHAIN"/>
    <property type="match status" value="1"/>
</dbReference>
<dbReference type="PANTHER" id="PTHR11693:SF22">
    <property type="entry name" value="ATP SYNTHASE SUBUNIT GAMMA, MITOCHONDRIAL"/>
    <property type="match status" value="1"/>
</dbReference>
<dbReference type="Pfam" id="PF00231">
    <property type="entry name" value="ATP-synt"/>
    <property type="match status" value="1"/>
</dbReference>
<dbReference type="PRINTS" id="PR00126">
    <property type="entry name" value="ATPASEGAMMA"/>
</dbReference>
<dbReference type="SUPFAM" id="SSF52943">
    <property type="entry name" value="ATP synthase (F1-ATPase), gamma subunit"/>
    <property type="match status" value="1"/>
</dbReference>
<dbReference type="PROSITE" id="PS00153">
    <property type="entry name" value="ATPASE_GAMMA"/>
    <property type="match status" value="1"/>
</dbReference>
<protein>
    <recommendedName>
        <fullName evidence="1">ATP synthase gamma chain</fullName>
    </recommendedName>
    <alternativeName>
        <fullName evidence="1">ATP synthase F1 sector gamma subunit</fullName>
    </alternativeName>
    <alternativeName>
        <fullName evidence="1">F-ATPase gamma subunit</fullName>
    </alternativeName>
</protein>
<comment type="function">
    <text evidence="1">Produces ATP from ADP in the presence of a proton gradient across the membrane. The gamma chain is believed to be important in regulating ATPase activity and the flow of protons through the CF(0) complex.</text>
</comment>
<comment type="subunit">
    <text evidence="1">F-type ATPases have 2 components, CF(1) - the catalytic core - and CF(0) - the membrane proton channel. CF(1) has five subunits: alpha(3), beta(3), gamma(1), delta(1), epsilon(1). CF(0) has three main subunits: a, b and c.</text>
</comment>
<comment type="subcellular location">
    <subcellularLocation>
        <location evidence="1">Cell membrane</location>
        <topology evidence="1">Peripheral membrane protein</topology>
    </subcellularLocation>
</comment>
<comment type="similarity">
    <text evidence="1">Belongs to the ATPase gamma chain family.</text>
</comment>
<sequence>MTGSLSEIKVRITSTQKTGKITSAMKMVSSAKLVKSEQAAKDFQIYASKIRQITTDLLHSDLRKGSSNPMLISRPIKKTAYIVITSDKGLVGAYNSTILKAVMDTIKDYHPKGDDYTIISIGGMGSDFFRARHIPVAFELRGLEDNPSFEEVNRIISKSVEMYKNELFDELYVCYSHHINSLTSQVRVEKMLPISDLDADEASEDNVANFELEPSREAILEQLLPQYAESLIYGAIIDAKTAEHAAGMTAMQTATDNADKVIEDLTKLYNRVRQAAITQEITEIVAGANALD</sequence>
<proteinExistence type="inferred from homology"/>
<keyword id="KW-0066">ATP synthesis</keyword>
<keyword id="KW-1003">Cell membrane</keyword>
<keyword id="KW-0139">CF(1)</keyword>
<keyword id="KW-0375">Hydrogen ion transport</keyword>
<keyword id="KW-0406">Ion transport</keyword>
<keyword id="KW-0472">Membrane</keyword>
<keyword id="KW-1185">Reference proteome</keyword>
<keyword id="KW-0813">Transport</keyword>
<reference key="1">
    <citation type="journal article" date="1996" name="Gene">
        <title>Cloning and nucleotide sequence analysis of the Streptococcus mutans membrane-bound, proton-translocating ATPase operon.</title>
        <authorList>
            <person name="Smith A.J."/>
            <person name="Quivey R.G."/>
            <person name="Faustoferri R.C."/>
        </authorList>
    </citation>
    <scope>NUCLEOTIDE SEQUENCE [GENOMIC DNA]</scope>
    <source>
        <strain>GS-5</strain>
    </source>
</reference>
<reference key="2">
    <citation type="journal article" date="2002" name="Proc. Natl. Acad. Sci. U.S.A.">
        <title>Genome sequence of Streptococcus mutans UA159, a cariogenic dental pathogen.</title>
        <authorList>
            <person name="Ajdic D.J."/>
            <person name="McShan W.M."/>
            <person name="McLaughlin R.E."/>
            <person name="Savic G."/>
            <person name="Chang J."/>
            <person name="Carson M.B."/>
            <person name="Primeaux C."/>
            <person name="Tian R."/>
            <person name="Kenton S."/>
            <person name="Jia H.G."/>
            <person name="Lin S.P."/>
            <person name="Qian Y."/>
            <person name="Li S."/>
            <person name="Zhu H."/>
            <person name="Najar F.Z."/>
            <person name="Lai H."/>
            <person name="White J."/>
            <person name="Roe B.A."/>
            <person name="Ferretti J.J."/>
        </authorList>
    </citation>
    <scope>NUCLEOTIDE SEQUENCE [LARGE SCALE GENOMIC DNA]</scope>
    <source>
        <strain>ATCC 700610 / UA159</strain>
    </source>
</reference>
<evidence type="ECO:0000255" key="1">
    <source>
        <dbReference type="HAMAP-Rule" id="MF_00815"/>
    </source>
</evidence>
<evidence type="ECO:0000305" key="2"/>
<gene>
    <name evidence="1" type="primary">atpG</name>
    <name evidence="1" type="synonym">atpC</name>
    <name type="ordered locus">SMU_1529</name>
</gene>
<organism>
    <name type="scientific">Streptococcus mutans serotype c (strain ATCC 700610 / UA159)</name>
    <dbReference type="NCBI Taxonomy" id="210007"/>
    <lineage>
        <taxon>Bacteria</taxon>
        <taxon>Bacillati</taxon>
        <taxon>Bacillota</taxon>
        <taxon>Bacilli</taxon>
        <taxon>Lactobacillales</taxon>
        <taxon>Streptococcaceae</taxon>
        <taxon>Streptococcus</taxon>
    </lineage>
</organism>